<gene>
    <name evidence="1" type="primary">serS</name>
    <name type="ordered locus">SYO3AOP1_1195</name>
</gene>
<protein>
    <recommendedName>
        <fullName evidence="1">Serine--tRNA ligase</fullName>
        <ecNumber evidence="1">6.1.1.11</ecNumber>
    </recommendedName>
    <alternativeName>
        <fullName evidence="1">Seryl-tRNA synthetase</fullName>
        <shortName evidence="1">SerRS</shortName>
    </alternativeName>
    <alternativeName>
        <fullName evidence="1">Seryl-tRNA(Ser/Sec) synthetase</fullName>
    </alternativeName>
</protein>
<keyword id="KW-0030">Aminoacyl-tRNA synthetase</keyword>
<keyword id="KW-0067">ATP-binding</keyword>
<keyword id="KW-0963">Cytoplasm</keyword>
<keyword id="KW-0436">Ligase</keyword>
<keyword id="KW-0547">Nucleotide-binding</keyword>
<keyword id="KW-0648">Protein biosynthesis</keyword>
<dbReference type="EC" id="6.1.1.11" evidence="1"/>
<dbReference type="EMBL" id="CP001080">
    <property type="protein sequence ID" value="ACD66806.1"/>
    <property type="molecule type" value="Genomic_DNA"/>
</dbReference>
<dbReference type="RefSeq" id="WP_012459870.1">
    <property type="nucleotide sequence ID" value="NC_010730.1"/>
</dbReference>
<dbReference type="SMR" id="B2VA33"/>
<dbReference type="STRING" id="436114.SYO3AOP1_1195"/>
<dbReference type="KEGG" id="sul:SYO3AOP1_1195"/>
<dbReference type="eggNOG" id="COG0172">
    <property type="taxonomic scope" value="Bacteria"/>
</dbReference>
<dbReference type="HOGENOM" id="CLU_023797_1_1_0"/>
<dbReference type="UniPathway" id="UPA00906">
    <property type="reaction ID" value="UER00895"/>
</dbReference>
<dbReference type="GO" id="GO:0005737">
    <property type="term" value="C:cytoplasm"/>
    <property type="evidence" value="ECO:0007669"/>
    <property type="project" value="UniProtKB-SubCell"/>
</dbReference>
<dbReference type="GO" id="GO:0005524">
    <property type="term" value="F:ATP binding"/>
    <property type="evidence" value="ECO:0007669"/>
    <property type="project" value="UniProtKB-UniRule"/>
</dbReference>
<dbReference type="GO" id="GO:0004828">
    <property type="term" value="F:serine-tRNA ligase activity"/>
    <property type="evidence" value="ECO:0007669"/>
    <property type="project" value="UniProtKB-UniRule"/>
</dbReference>
<dbReference type="GO" id="GO:0016260">
    <property type="term" value="P:selenocysteine biosynthetic process"/>
    <property type="evidence" value="ECO:0007669"/>
    <property type="project" value="UniProtKB-UniRule"/>
</dbReference>
<dbReference type="GO" id="GO:0006434">
    <property type="term" value="P:seryl-tRNA aminoacylation"/>
    <property type="evidence" value="ECO:0007669"/>
    <property type="project" value="UniProtKB-UniRule"/>
</dbReference>
<dbReference type="CDD" id="cd00770">
    <property type="entry name" value="SerRS_core"/>
    <property type="match status" value="1"/>
</dbReference>
<dbReference type="Gene3D" id="3.30.930.10">
    <property type="entry name" value="Bira Bifunctional Protein, Domain 2"/>
    <property type="match status" value="1"/>
</dbReference>
<dbReference type="Gene3D" id="1.10.287.40">
    <property type="entry name" value="Serine-tRNA synthetase, tRNA binding domain"/>
    <property type="match status" value="1"/>
</dbReference>
<dbReference type="HAMAP" id="MF_00176">
    <property type="entry name" value="Ser_tRNA_synth_type1"/>
    <property type="match status" value="1"/>
</dbReference>
<dbReference type="InterPro" id="IPR002314">
    <property type="entry name" value="aa-tRNA-synt_IIb"/>
</dbReference>
<dbReference type="InterPro" id="IPR006195">
    <property type="entry name" value="aa-tRNA-synth_II"/>
</dbReference>
<dbReference type="InterPro" id="IPR045864">
    <property type="entry name" value="aa-tRNA-synth_II/BPL/LPL"/>
</dbReference>
<dbReference type="InterPro" id="IPR002317">
    <property type="entry name" value="Ser-tRNA-ligase_type_1"/>
</dbReference>
<dbReference type="InterPro" id="IPR015866">
    <property type="entry name" value="Ser-tRNA-synth_1_N"/>
</dbReference>
<dbReference type="InterPro" id="IPR042103">
    <property type="entry name" value="SerRS_1_N_sf"/>
</dbReference>
<dbReference type="InterPro" id="IPR033729">
    <property type="entry name" value="SerRS_core"/>
</dbReference>
<dbReference type="InterPro" id="IPR010978">
    <property type="entry name" value="tRNA-bd_arm"/>
</dbReference>
<dbReference type="NCBIfam" id="TIGR00414">
    <property type="entry name" value="serS"/>
    <property type="match status" value="1"/>
</dbReference>
<dbReference type="PANTHER" id="PTHR43697:SF1">
    <property type="entry name" value="SERINE--TRNA LIGASE"/>
    <property type="match status" value="1"/>
</dbReference>
<dbReference type="PANTHER" id="PTHR43697">
    <property type="entry name" value="SERYL-TRNA SYNTHETASE"/>
    <property type="match status" value="1"/>
</dbReference>
<dbReference type="Pfam" id="PF02403">
    <property type="entry name" value="Seryl_tRNA_N"/>
    <property type="match status" value="1"/>
</dbReference>
<dbReference type="Pfam" id="PF00587">
    <property type="entry name" value="tRNA-synt_2b"/>
    <property type="match status" value="1"/>
</dbReference>
<dbReference type="PIRSF" id="PIRSF001529">
    <property type="entry name" value="Ser-tRNA-synth_IIa"/>
    <property type="match status" value="1"/>
</dbReference>
<dbReference type="PRINTS" id="PR00981">
    <property type="entry name" value="TRNASYNTHSER"/>
</dbReference>
<dbReference type="SUPFAM" id="SSF55681">
    <property type="entry name" value="Class II aaRS and biotin synthetases"/>
    <property type="match status" value="1"/>
</dbReference>
<dbReference type="SUPFAM" id="SSF46589">
    <property type="entry name" value="tRNA-binding arm"/>
    <property type="match status" value="1"/>
</dbReference>
<dbReference type="PROSITE" id="PS50862">
    <property type="entry name" value="AA_TRNA_LIGASE_II"/>
    <property type="match status" value="1"/>
</dbReference>
<reference key="1">
    <citation type="journal article" date="2009" name="J. Bacteriol.">
        <title>Complete and draft genome sequences of six members of the Aquificales.</title>
        <authorList>
            <person name="Reysenbach A.-L."/>
            <person name="Hamamura N."/>
            <person name="Podar M."/>
            <person name="Griffiths E."/>
            <person name="Ferreira S."/>
            <person name="Hochstein R."/>
            <person name="Heidelberg J."/>
            <person name="Johnson J."/>
            <person name="Mead D."/>
            <person name="Pohorille A."/>
            <person name="Sarmiento M."/>
            <person name="Schweighofer K."/>
            <person name="Seshadri R."/>
            <person name="Voytek M.A."/>
        </authorList>
    </citation>
    <scope>NUCLEOTIDE SEQUENCE [LARGE SCALE GENOMIC DNA]</scope>
    <source>
        <strain>YO3AOP1</strain>
    </source>
</reference>
<proteinExistence type="inferred from homology"/>
<comment type="function">
    <text evidence="1">Catalyzes the attachment of serine to tRNA(Ser). Is also able to aminoacylate tRNA(Sec) with serine, to form the misacylated tRNA L-seryl-tRNA(Sec), which will be further converted into selenocysteinyl-tRNA(Sec).</text>
</comment>
<comment type="catalytic activity">
    <reaction evidence="1">
        <text>tRNA(Ser) + L-serine + ATP = L-seryl-tRNA(Ser) + AMP + diphosphate + H(+)</text>
        <dbReference type="Rhea" id="RHEA:12292"/>
        <dbReference type="Rhea" id="RHEA-COMP:9669"/>
        <dbReference type="Rhea" id="RHEA-COMP:9703"/>
        <dbReference type="ChEBI" id="CHEBI:15378"/>
        <dbReference type="ChEBI" id="CHEBI:30616"/>
        <dbReference type="ChEBI" id="CHEBI:33019"/>
        <dbReference type="ChEBI" id="CHEBI:33384"/>
        <dbReference type="ChEBI" id="CHEBI:78442"/>
        <dbReference type="ChEBI" id="CHEBI:78533"/>
        <dbReference type="ChEBI" id="CHEBI:456215"/>
        <dbReference type="EC" id="6.1.1.11"/>
    </reaction>
</comment>
<comment type="catalytic activity">
    <reaction evidence="1">
        <text>tRNA(Sec) + L-serine + ATP = L-seryl-tRNA(Sec) + AMP + diphosphate + H(+)</text>
        <dbReference type="Rhea" id="RHEA:42580"/>
        <dbReference type="Rhea" id="RHEA-COMP:9742"/>
        <dbReference type="Rhea" id="RHEA-COMP:10128"/>
        <dbReference type="ChEBI" id="CHEBI:15378"/>
        <dbReference type="ChEBI" id="CHEBI:30616"/>
        <dbReference type="ChEBI" id="CHEBI:33019"/>
        <dbReference type="ChEBI" id="CHEBI:33384"/>
        <dbReference type="ChEBI" id="CHEBI:78442"/>
        <dbReference type="ChEBI" id="CHEBI:78533"/>
        <dbReference type="ChEBI" id="CHEBI:456215"/>
        <dbReference type="EC" id="6.1.1.11"/>
    </reaction>
</comment>
<comment type="pathway">
    <text evidence="1">Aminoacyl-tRNA biosynthesis; selenocysteinyl-tRNA(Sec) biosynthesis; L-seryl-tRNA(Sec) from L-serine and tRNA(Sec): step 1/1.</text>
</comment>
<comment type="subunit">
    <text evidence="1">Homodimer. The tRNA molecule binds across the dimer.</text>
</comment>
<comment type="subcellular location">
    <subcellularLocation>
        <location evidence="1">Cytoplasm</location>
    </subcellularLocation>
</comment>
<comment type="domain">
    <text evidence="1">Consists of two distinct domains, a catalytic core and a N-terminal extension that is involved in tRNA binding.</text>
</comment>
<comment type="similarity">
    <text evidence="1">Belongs to the class-II aminoacyl-tRNA synthetase family. Type-1 seryl-tRNA synthetase subfamily.</text>
</comment>
<organism>
    <name type="scientific">Sulfurihydrogenibium sp. (strain YO3AOP1)</name>
    <dbReference type="NCBI Taxonomy" id="436114"/>
    <lineage>
        <taxon>Bacteria</taxon>
        <taxon>Pseudomonadati</taxon>
        <taxon>Aquificota</taxon>
        <taxon>Aquificia</taxon>
        <taxon>Aquificales</taxon>
        <taxon>Hydrogenothermaceae</taxon>
        <taxon>Sulfurihydrogenibium</taxon>
    </lineage>
</organism>
<accession>B2VA33</accession>
<sequence length="417" mass="48728">MIDIKLLRENPDFVKERLKTRDESYLKLIDRLLEIDEERRKIIKEIESLRAERNEKSKLFPILKKEGKDTTEIQQRVKQIGEIIKNLEDKLQEIENEFNNILYYIPNLPAPDVPIGKDENDNVEIRRWGKPRKFDFEPLSHYEIGERLGILDFERGAKLSGSRFTVMFKEAARLERALINFMLDVHTKQHGYTEVWTPALVKPEILFGTGQLPKFKDDLYKIEDEDLYLIPTAEVTLTNLHADEILNEEDLPKYYTAYTPCFRKEAGSHGKDVKGILRQHQFDKVELVKIVKPEDSYNELEKLVNEAEKILQLLEIPYRVVLLCTGDMGFSAAKTYDIEVWIPSQNRYREISSCSNTEDFQARRAKIRYKDKDGKNHYVHTLNGSGLAVGRTLIAIMENYQKPDGTFEIPKVLKDYL</sequence>
<feature type="chain" id="PRO_1000098133" description="Serine--tRNA ligase">
    <location>
        <begin position="1"/>
        <end position="417"/>
    </location>
</feature>
<feature type="binding site" evidence="1">
    <location>
        <begin position="232"/>
        <end position="234"/>
    </location>
    <ligand>
        <name>L-serine</name>
        <dbReference type="ChEBI" id="CHEBI:33384"/>
    </ligand>
</feature>
<feature type="binding site" evidence="1">
    <location>
        <begin position="263"/>
        <end position="265"/>
    </location>
    <ligand>
        <name>ATP</name>
        <dbReference type="ChEBI" id="CHEBI:30616"/>
    </ligand>
</feature>
<feature type="binding site" evidence="1">
    <location>
        <position position="286"/>
    </location>
    <ligand>
        <name>L-serine</name>
        <dbReference type="ChEBI" id="CHEBI:33384"/>
    </ligand>
</feature>
<feature type="binding site" evidence="1">
    <location>
        <begin position="350"/>
        <end position="353"/>
    </location>
    <ligand>
        <name>ATP</name>
        <dbReference type="ChEBI" id="CHEBI:30616"/>
    </ligand>
</feature>
<feature type="binding site" evidence="1">
    <location>
        <position position="385"/>
    </location>
    <ligand>
        <name>L-serine</name>
        <dbReference type="ChEBI" id="CHEBI:33384"/>
    </ligand>
</feature>
<name>SYS_SULSY</name>
<evidence type="ECO:0000255" key="1">
    <source>
        <dbReference type="HAMAP-Rule" id="MF_00176"/>
    </source>
</evidence>